<reference key="1">
    <citation type="journal article" date="1982" name="Nucleic Acids Res.">
        <title>Organisation of feather keratin genes in the chick genome.</title>
        <authorList>
            <person name="Molloy P.L."/>
            <person name="Powell B.C."/>
            <person name="Gregg K."/>
            <person name="Barone E.D."/>
            <person name="Rogers G.E."/>
        </authorList>
    </citation>
    <scope>NUCLEOTIDE SEQUENCE [GENOMIC DNA]</scope>
</reference>
<reference key="2">
    <citation type="journal article" date="1989" name="J. Mol. Biol.">
        <title>Avian keratin genes. I. A molecular analysis of the structure and expression of a group of feather keratin genes.</title>
        <authorList>
            <person name="Presland R.B."/>
            <person name="Gregg K."/>
            <person name="Molloy P.L."/>
            <person name="Morris C.P."/>
            <person name="Crocker L.A."/>
            <person name="Rogers G.E."/>
        </authorList>
    </citation>
    <scope>NUCLEOTIDE SEQUENCE [GENOMIC DNA]</scope>
</reference>
<protein>
    <recommendedName>
        <fullName>Feather keratin 1</fullName>
    </recommendedName>
    <alternativeName>
        <fullName>F-ker</fullName>
    </alternativeName>
    <alternativeName>
        <fullName>Keratin gene C protein</fullName>
    </alternativeName>
</protein>
<name>KRFC_CHICK</name>
<proteinExistence type="inferred from homology"/>
<comment type="subunit">
    <text>The avian keratins (F-ker, S-ker, C-ker and B-ker) are a complex mixture of very similar polypeptides.</text>
</comment>
<comment type="similarity">
    <text evidence="1">Belongs to the avian keratin family.</text>
</comment>
<sequence length="98" mass="9972">MSCFDLCRPCGPTPLANSCNEPCVRQCQDSRVVIQPSPVVVTLPGPILSSFPQNTAAGSSTSAAVGSILSEEGVPISSGGFGISGLGSRFSGRRCLPC</sequence>
<accession>P02450</accession>
<feature type="initiator methionine" description="Removed">
    <location>
        <position position="1"/>
    </location>
</feature>
<feature type="chain" id="PRO_0000096999" description="Feather keratin 1">
    <location>
        <begin position="2"/>
        <end position="98"/>
    </location>
</feature>
<evidence type="ECO:0000305" key="1"/>
<organism>
    <name type="scientific">Gallus gallus</name>
    <name type="common">Chicken</name>
    <dbReference type="NCBI Taxonomy" id="9031"/>
    <lineage>
        <taxon>Eukaryota</taxon>
        <taxon>Metazoa</taxon>
        <taxon>Chordata</taxon>
        <taxon>Craniata</taxon>
        <taxon>Vertebrata</taxon>
        <taxon>Euteleostomi</taxon>
        <taxon>Archelosauria</taxon>
        <taxon>Archosauria</taxon>
        <taxon>Dinosauria</taxon>
        <taxon>Saurischia</taxon>
        <taxon>Theropoda</taxon>
        <taxon>Coelurosauria</taxon>
        <taxon>Aves</taxon>
        <taxon>Neognathae</taxon>
        <taxon>Galloanserae</taxon>
        <taxon>Galliformes</taxon>
        <taxon>Phasianidae</taxon>
        <taxon>Phasianinae</taxon>
        <taxon>Gallus</taxon>
    </lineage>
</organism>
<dbReference type="EMBL" id="J00847">
    <property type="protein sequence ID" value="AAA48930.1"/>
    <property type="molecule type" value="Genomic_DNA"/>
</dbReference>
<dbReference type="PIR" id="S06805">
    <property type="entry name" value="KRCHF1"/>
</dbReference>
<dbReference type="GlyGen" id="P02450">
    <property type="glycosylation" value="1 site"/>
</dbReference>
<dbReference type="PaxDb" id="9031-ENSGALP00000039998"/>
<dbReference type="VEuPathDB" id="HostDB:LOC428291"/>
<dbReference type="eggNOG" id="ENOG502TDE8">
    <property type="taxonomic scope" value="Eukaryota"/>
</dbReference>
<dbReference type="InParanoid" id="P02450"/>
<dbReference type="PhylomeDB" id="P02450"/>
<dbReference type="Proteomes" id="UP000000539">
    <property type="component" value="Unassembled WGS sequence"/>
</dbReference>
<dbReference type="GO" id="GO:0005882">
    <property type="term" value="C:intermediate filament"/>
    <property type="evidence" value="ECO:0007669"/>
    <property type="project" value="UniProtKB-KW"/>
</dbReference>
<dbReference type="GO" id="GO:0005200">
    <property type="term" value="F:structural constituent of cytoskeleton"/>
    <property type="evidence" value="ECO:0007669"/>
    <property type="project" value="InterPro"/>
</dbReference>
<dbReference type="InterPro" id="IPR003461">
    <property type="entry name" value="Keratin"/>
</dbReference>
<dbReference type="PANTHER" id="PTHR31203">
    <property type="entry name" value="BETA-KERATIN-RELATED PROTEIN-RELATED"/>
    <property type="match status" value="1"/>
</dbReference>
<dbReference type="PANTHER" id="PTHR31203:SF1">
    <property type="entry name" value="BETA-KERATIN-RELATED PROTEIN-RELATED"/>
    <property type="match status" value="1"/>
</dbReference>
<dbReference type="Pfam" id="PF02422">
    <property type="entry name" value="Keratin"/>
    <property type="match status" value="1"/>
</dbReference>
<keyword id="KW-0416">Keratin</keyword>
<keyword id="KW-1185">Reference proteome</keyword>